<comment type="function">
    <text evidence="1 2">Mediates influx of magnesium ions (By similarity). Alternates between open and closed states. Activated by low cytoplasmic Mg(2+) levels. Inactive when cytoplasmic Mg(2+) levels are high (By similarity).</text>
</comment>
<comment type="catalytic activity">
    <reaction evidence="1">
        <text>Mg(2+)(in) = Mg(2+)(out)</text>
        <dbReference type="Rhea" id="RHEA:29827"/>
        <dbReference type="ChEBI" id="CHEBI:18420"/>
    </reaction>
</comment>
<comment type="subunit">
    <text evidence="2">Homopentamer. In the absence of Mg(2+), interactions between subunits are weakened, and dimers, trimers and tetramers can be observed in vitro (By similarity).</text>
</comment>
<comment type="subcellular location">
    <subcellularLocation>
        <location evidence="1">Cell inner membrane</location>
        <topology evidence="2">Multi-pass membrane protein</topology>
    </subcellularLocation>
</comment>
<comment type="domain">
    <text evidence="2">The central ion permeation pathway is formed by the first transmembrane domain from each of the five subunits. Mg(2+) binding strengthens interactions between subunits and leads to the formation of a symmetrical homopentamer surrounding a closed ion permeation pathway. Low Mg(2+) concentrations trigger both a conformation change within each subunit and a loosening of the interactions between subunits. This results in an open ion conduction pathway. In addition, this results in a less symmetrical shape of the whole complex.</text>
</comment>
<comment type="similarity">
    <text evidence="4">Belongs to the CorA metal ion transporter (MIT) (TC 1.A.35) family.</text>
</comment>
<feature type="chain" id="PRO_0000201530" description="Magnesium transport protein CorA">
    <location>
        <begin position="1"/>
        <end position="315"/>
    </location>
</feature>
<feature type="transmembrane region" description="Helical" evidence="3">
    <location>
        <begin position="257"/>
        <end position="277"/>
    </location>
</feature>
<feature type="transmembrane region" description="Helical" evidence="3">
    <location>
        <begin position="289"/>
        <end position="309"/>
    </location>
</feature>
<feature type="short sequence motif" description="Probable selectivity filter" evidence="2">
    <location>
        <begin position="276"/>
        <end position="278"/>
    </location>
</feature>
<feature type="site" description="Essential for ion permeation" evidence="2">
    <location>
        <position position="252"/>
    </location>
</feature>
<reference key="1">
    <citation type="journal article" date="1995" name="Science">
        <title>Whole-genome random sequencing and assembly of Haemophilus influenzae Rd.</title>
        <authorList>
            <person name="Fleischmann R.D."/>
            <person name="Adams M.D."/>
            <person name="White O."/>
            <person name="Clayton R.A."/>
            <person name="Kirkness E.F."/>
            <person name="Kerlavage A.R."/>
            <person name="Bult C.J."/>
            <person name="Tomb J.-F."/>
            <person name="Dougherty B.A."/>
            <person name="Merrick J.M."/>
            <person name="McKenney K."/>
            <person name="Sutton G.G."/>
            <person name="FitzHugh W."/>
            <person name="Fields C.A."/>
            <person name="Gocayne J.D."/>
            <person name="Scott J.D."/>
            <person name="Shirley R."/>
            <person name="Liu L.-I."/>
            <person name="Glodek A."/>
            <person name="Kelley J.M."/>
            <person name="Weidman J.F."/>
            <person name="Phillips C.A."/>
            <person name="Spriggs T."/>
            <person name="Hedblom E."/>
            <person name="Cotton M.D."/>
            <person name="Utterback T.R."/>
            <person name="Hanna M.C."/>
            <person name="Nguyen D.T."/>
            <person name="Saudek D.M."/>
            <person name="Brandon R.C."/>
            <person name="Fine L.D."/>
            <person name="Fritchman J.L."/>
            <person name="Fuhrmann J.L."/>
            <person name="Geoghagen N.S.M."/>
            <person name="Gnehm C.L."/>
            <person name="McDonald L.A."/>
            <person name="Small K.V."/>
            <person name="Fraser C.M."/>
            <person name="Smith H.O."/>
            <person name="Venter J.C."/>
        </authorList>
    </citation>
    <scope>NUCLEOTIDE SEQUENCE [LARGE SCALE GENOMIC DNA]</scope>
    <source>
        <strain>ATCC 51907 / DSM 11121 / KW20 / Rd</strain>
    </source>
</reference>
<accession>P44998</accession>
<protein>
    <recommendedName>
        <fullName>Magnesium transport protein CorA</fullName>
    </recommendedName>
</protein>
<organism>
    <name type="scientific">Haemophilus influenzae (strain ATCC 51907 / DSM 11121 / KW20 / Rd)</name>
    <dbReference type="NCBI Taxonomy" id="71421"/>
    <lineage>
        <taxon>Bacteria</taxon>
        <taxon>Pseudomonadati</taxon>
        <taxon>Pseudomonadota</taxon>
        <taxon>Gammaproteobacteria</taxon>
        <taxon>Pasteurellales</taxon>
        <taxon>Pasteurellaceae</taxon>
        <taxon>Haemophilus</taxon>
    </lineage>
</organism>
<proteinExistence type="inferred from homology"/>
<keyword id="KW-0997">Cell inner membrane</keyword>
<keyword id="KW-1003">Cell membrane</keyword>
<keyword id="KW-0406">Ion transport</keyword>
<keyword id="KW-0460">Magnesium</keyword>
<keyword id="KW-0472">Membrane</keyword>
<keyword id="KW-1185">Reference proteome</keyword>
<keyword id="KW-0812">Transmembrane</keyword>
<keyword id="KW-1133">Transmembrane helix</keyword>
<keyword id="KW-0813">Transport</keyword>
<dbReference type="EMBL" id="L42023">
    <property type="protein sequence ID" value="AAC22695.1"/>
    <property type="molecule type" value="Genomic_DNA"/>
</dbReference>
<dbReference type="PIR" id="A64109">
    <property type="entry name" value="A64109"/>
</dbReference>
<dbReference type="RefSeq" id="NP_439195.1">
    <property type="nucleotide sequence ID" value="NC_000907.1"/>
</dbReference>
<dbReference type="SMR" id="P44998"/>
<dbReference type="STRING" id="71421.HI_1035"/>
<dbReference type="EnsemblBacteria" id="AAC22695">
    <property type="protein sequence ID" value="AAC22695"/>
    <property type="gene ID" value="HI_1035"/>
</dbReference>
<dbReference type="KEGG" id="hin:HI_1035"/>
<dbReference type="PATRIC" id="fig|71421.8.peg.1079"/>
<dbReference type="eggNOG" id="COG0598">
    <property type="taxonomic scope" value="Bacteria"/>
</dbReference>
<dbReference type="HOGENOM" id="CLU_007127_5_0_6"/>
<dbReference type="OrthoDB" id="9803416at2"/>
<dbReference type="PhylomeDB" id="P44998"/>
<dbReference type="BioCyc" id="HINF71421:G1GJ1-1075-MONOMER"/>
<dbReference type="Proteomes" id="UP000000579">
    <property type="component" value="Chromosome"/>
</dbReference>
<dbReference type="GO" id="GO:0005886">
    <property type="term" value="C:plasma membrane"/>
    <property type="evidence" value="ECO:0007669"/>
    <property type="project" value="UniProtKB-SubCell"/>
</dbReference>
<dbReference type="GO" id="GO:0015087">
    <property type="term" value="F:cobalt ion transmembrane transporter activity"/>
    <property type="evidence" value="ECO:0000318"/>
    <property type="project" value="GO_Central"/>
</dbReference>
<dbReference type="GO" id="GO:0015095">
    <property type="term" value="F:magnesium ion transmembrane transporter activity"/>
    <property type="evidence" value="ECO:0000318"/>
    <property type="project" value="GO_Central"/>
</dbReference>
<dbReference type="GO" id="GO:0015099">
    <property type="term" value="F:nickel cation transmembrane transporter activity"/>
    <property type="evidence" value="ECO:0000318"/>
    <property type="project" value="GO_Central"/>
</dbReference>
<dbReference type="CDD" id="cd12835">
    <property type="entry name" value="EcCorA-like_1"/>
    <property type="match status" value="1"/>
</dbReference>
<dbReference type="FunFam" id="1.20.58.340:FF:000001">
    <property type="entry name" value="Magnesium transport protein CorA"/>
    <property type="match status" value="1"/>
</dbReference>
<dbReference type="Gene3D" id="1.20.58.340">
    <property type="entry name" value="Magnesium transport protein CorA, transmembrane region"/>
    <property type="match status" value="1"/>
</dbReference>
<dbReference type="InterPro" id="IPR045861">
    <property type="entry name" value="CorA_cytoplasmic_dom"/>
</dbReference>
<dbReference type="InterPro" id="IPR050829">
    <property type="entry name" value="CorA_MIT"/>
</dbReference>
<dbReference type="InterPro" id="IPR045863">
    <property type="entry name" value="CorA_TM1_TM2"/>
</dbReference>
<dbReference type="InterPro" id="IPR004488">
    <property type="entry name" value="Mg/Co-transport_prot_CorA"/>
</dbReference>
<dbReference type="InterPro" id="IPR002523">
    <property type="entry name" value="MgTranspt_CorA/ZnTranspt_ZntB"/>
</dbReference>
<dbReference type="NCBIfam" id="TIGR00383">
    <property type="entry name" value="corA"/>
    <property type="match status" value="1"/>
</dbReference>
<dbReference type="PANTHER" id="PTHR47685">
    <property type="entry name" value="MAGNESIUM TRANSPORT PROTEIN CORA"/>
    <property type="match status" value="1"/>
</dbReference>
<dbReference type="PANTHER" id="PTHR47685:SF1">
    <property type="entry name" value="MAGNESIUM TRANSPORT PROTEIN CORA"/>
    <property type="match status" value="1"/>
</dbReference>
<dbReference type="Pfam" id="PF01544">
    <property type="entry name" value="CorA"/>
    <property type="match status" value="1"/>
</dbReference>
<dbReference type="SUPFAM" id="SSF143865">
    <property type="entry name" value="CorA soluble domain-like"/>
    <property type="match status" value="1"/>
</dbReference>
<dbReference type="SUPFAM" id="SSF144083">
    <property type="entry name" value="Magnesium transport protein CorA, transmembrane region"/>
    <property type="match status" value="1"/>
</dbReference>
<evidence type="ECO:0000250" key="1">
    <source>
        <dbReference type="UniProtKB" id="P0ABI4"/>
    </source>
</evidence>
<evidence type="ECO:0000250" key="2">
    <source>
        <dbReference type="UniProtKB" id="Q9WZ31"/>
    </source>
</evidence>
<evidence type="ECO:0000255" key="3"/>
<evidence type="ECO:0000305" key="4"/>
<gene>
    <name type="primary">corA</name>
    <name type="ordered locus">HI_1035</name>
</gene>
<sequence>MINAFAINDSRLVRIDEDQTDLNTAIWLDLLEPTGEEREMLQEGLGQSLASFLELEDIEASARFFEDEDGLHLHSFFYCEDEDNYADLASVAFTIRDGRLFTLRDRELPAFRLYRMRSRSQRLLECNSYEVLLDLFETKIEQLADVIENIYADLEELSRVILNGKQDEAFDEALNTLTEQEDTSSKVRLCLMDTQRALGFLVRKTRLPTNQLEQAREILRDIESLQPHNESLFQKVNFLMQAAMGYINIEQNKIMKFFSVVSVMFLPATLVASTYGMNFDFMPELHFKYGYPMAIGLMIAAALTPYIYFRRKGWL</sequence>
<name>CORA_HAEIN</name>